<reference key="1">
    <citation type="journal article" date="2012" name="BMC Microbiol.">
        <title>Genome sequence of Desulfitobacterium hafniense DCB-2, a Gram-positive anaerobe capable of dehalogenation and metal reduction.</title>
        <authorList>
            <person name="Kim S.H."/>
            <person name="Harzman C."/>
            <person name="Davis J.K."/>
            <person name="Hutcheson R."/>
            <person name="Broderick J.B."/>
            <person name="Marsh T.L."/>
            <person name="Tiedje J.M."/>
        </authorList>
    </citation>
    <scope>NUCLEOTIDE SEQUENCE [LARGE SCALE GENOMIC DNA]</scope>
    <source>
        <strain>DSM 10664 / DCB-2</strain>
    </source>
</reference>
<organism>
    <name type="scientific">Desulfitobacterium hafniense (strain DSM 10664 / DCB-2)</name>
    <dbReference type="NCBI Taxonomy" id="272564"/>
    <lineage>
        <taxon>Bacteria</taxon>
        <taxon>Bacillati</taxon>
        <taxon>Bacillota</taxon>
        <taxon>Clostridia</taxon>
        <taxon>Eubacteriales</taxon>
        <taxon>Desulfitobacteriaceae</taxon>
        <taxon>Desulfitobacterium</taxon>
    </lineage>
</organism>
<accession>B8FSV8</accession>
<keyword id="KW-0963">Cytoplasm</keyword>
<keyword id="KW-0227">DNA damage</keyword>
<keyword id="KW-0234">DNA repair</keyword>
<keyword id="KW-0378">Hydrolase</keyword>
<sequence>MQILKNDWHELLKDEFEQEYYQQLRKHLIQEYRTRTIYPDMYDIFNALHFTSYQDVKVVILGQDPYHGPNQAHGLSFSVKPGVPAPPSLQNIFKELQSDLGCRIPNHGYLKKWAEQGVLLLNTSLTVRAGQANSHAQIGWHQFTDKVIAALSQRQDPVVFILWGKNAQAKQSIIGSQHFIIKSVHPSPLSAHAGFFGSKPFSKANNFLVSQGKEPIDWQIEDI</sequence>
<comment type="function">
    <text evidence="1">Excises uracil residues from the DNA which can arise as a result of misincorporation of dUMP residues by DNA polymerase or due to deamination of cytosine.</text>
</comment>
<comment type="catalytic activity">
    <reaction evidence="1">
        <text>Hydrolyzes single-stranded DNA or mismatched double-stranded DNA and polynucleotides, releasing free uracil.</text>
        <dbReference type="EC" id="3.2.2.27"/>
    </reaction>
</comment>
<comment type="subcellular location">
    <subcellularLocation>
        <location evidence="1">Cytoplasm</location>
    </subcellularLocation>
</comment>
<comment type="similarity">
    <text evidence="1">Belongs to the uracil-DNA glycosylase (UDG) superfamily. UNG family.</text>
</comment>
<dbReference type="EC" id="3.2.2.27" evidence="1"/>
<dbReference type="EMBL" id="CP001336">
    <property type="protein sequence ID" value="ACL20319.1"/>
    <property type="molecule type" value="Genomic_DNA"/>
</dbReference>
<dbReference type="RefSeq" id="WP_005814489.1">
    <property type="nucleotide sequence ID" value="NC_011830.1"/>
</dbReference>
<dbReference type="SMR" id="B8FSV8"/>
<dbReference type="KEGG" id="dhd:Dhaf_2288"/>
<dbReference type="HOGENOM" id="CLU_032162_3_0_9"/>
<dbReference type="Proteomes" id="UP000007726">
    <property type="component" value="Chromosome"/>
</dbReference>
<dbReference type="GO" id="GO:0005737">
    <property type="term" value="C:cytoplasm"/>
    <property type="evidence" value="ECO:0007669"/>
    <property type="project" value="UniProtKB-SubCell"/>
</dbReference>
<dbReference type="GO" id="GO:0004844">
    <property type="term" value="F:uracil DNA N-glycosylase activity"/>
    <property type="evidence" value="ECO:0007669"/>
    <property type="project" value="UniProtKB-UniRule"/>
</dbReference>
<dbReference type="GO" id="GO:0097510">
    <property type="term" value="P:base-excision repair, AP site formation via deaminated base removal"/>
    <property type="evidence" value="ECO:0007669"/>
    <property type="project" value="TreeGrafter"/>
</dbReference>
<dbReference type="CDD" id="cd10027">
    <property type="entry name" value="UDG-F1-like"/>
    <property type="match status" value="1"/>
</dbReference>
<dbReference type="FunFam" id="3.40.470.10:FF:000001">
    <property type="entry name" value="Uracil-DNA glycosylase"/>
    <property type="match status" value="1"/>
</dbReference>
<dbReference type="Gene3D" id="3.40.470.10">
    <property type="entry name" value="Uracil-DNA glycosylase-like domain"/>
    <property type="match status" value="1"/>
</dbReference>
<dbReference type="HAMAP" id="MF_00148">
    <property type="entry name" value="UDG"/>
    <property type="match status" value="1"/>
</dbReference>
<dbReference type="InterPro" id="IPR002043">
    <property type="entry name" value="UDG_fam1"/>
</dbReference>
<dbReference type="InterPro" id="IPR018085">
    <property type="entry name" value="Ura-DNA_Glyclase_AS"/>
</dbReference>
<dbReference type="InterPro" id="IPR005122">
    <property type="entry name" value="Uracil-DNA_glycosylase-like"/>
</dbReference>
<dbReference type="InterPro" id="IPR036895">
    <property type="entry name" value="Uracil-DNA_glycosylase-like_sf"/>
</dbReference>
<dbReference type="NCBIfam" id="NF003588">
    <property type="entry name" value="PRK05254.1-1"/>
    <property type="match status" value="1"/>
</dbReference>
<dbReference type="NCBIfam" id="NF003589">
    <property type="entry name" value="PRK05254.1-2"/>
    <property type="match status" value="1"/>
</dbReference>
<dbReference type="NCBIfam" id="NF003591">
    <property type="entry name" value="PRK05254.1-4"/>
    <property type="match status" value="1"/>
</dbReference>
<dbReference type="NCBIfam" id="NF003592">
    <property type="entry name" value="PRK05254.1-5"/>
    <property type="match status" value="1"/>
</dbReference>
<dbReference type="NCBIfam" id="TIGR00628">
    <property type="entry name" value="ung"/>
    <property type="match status" value="1"/>
</dbReference>
<dbReference type="PANTHER" id="PTHR11264">
    <property type="entry name" value="URACIL-DNA GLYCOSYLASE"/>
    <property type="match status" value="1"/>
</dbReference>
<dbReference type="PANTHER" id="PTHR11264:SF0">
    <property type="entry name" value="URACIL-DNA GLYCOSYLASE"/>
    <property type="match status" value="1"/>
</dbReference>
<dbReference type="Pfam" id="PF03167">
    <property type="entry name" value="UDG"/>
    <property type="match status" value="1"/>
</dbReference>
<dbReference type="SMART" id="SM00986">
    <property type="entry name" value="UDG"/>
    <property type="match status" value="1"/>
</dbReference>
<dbReference type="SMART" id="SM00987">
    <property type="entry name" value="UreE_C"/>
    <property type="match status" value="1"/>
</dbReference>
<dbReference type="SUPFAM" id="SSF52141">
    <property type="entry name" value="Uracil-DNA glycosylase-like"/>
    <property type="match status" value="1"/>
</dbReference>
<dbReference type="PROSITE" id="PS00130">
    <property type="entry name" value="U_DNA_GLYCOSYLASE"/>
    <property type="match status" value="1"/>
</dbReference>
<name>UNG_DESHD</name>
<protein>
    <recommendedName>
        <fullName evidence="1">Uracil-DNA glycosylase</fullName>
        <shortName evidence="1">UDG</shortName>
        <ecNumber evidence="1">3.2.2.27</ecNumber>
    </recommendedName>
</protein>
<evidence type="ECO:0000255" key="1">
    <source>
        <dbReference type="HAMAP-Rule" id="MF_00148"/>
    </source>
</evidence>
<proteinExistence type="inferred from homology"/>
<gene>
    <name evidence="1" type="primary">ung</name>
    <name type="ordered locus">Dhaf_2288</name>
</gene>
<feature type="chain" id="PRO_1000199776" description="Uracil-DNA glycosylase">
    <location>
        <begin position="1"/>
        <end position="223"/>
    </location>
</feature>
<feature type="active site" description="Proton acceptor" evidence="1">
    <location>
        <position position="64"/>
    </location>
</feature>